<accession>Q5PKP2</accession>
<sequence length="546" mass="63239">MTPGEVRRLYFIIRTFLSYGLDELIPRMRLTLPLRLWRYSLFWMPNRHKDKLLGERLRLALQELGPVWIKFGQMLSTRRDLFPPQIADQLALLQDKVAPFDGRLAKAQIEEAMGGLPVEAWFDDFDIQPLASASIAQVHTARLKSNGKEVVIKVIRPDILPVIQADLKLIYRLARWVPRLLPDGRRLRPTEVVREYEKTLIDELNLLRESANAIQLRRNFENSPMLYIPEVYSDYCSQNMMVMERIYGIPVSDVAALEKNGTNMKLLAERGVKVFFTQVFRDSFFHADMHPGNIFVSHEHPENPQYIGIDCGIVGSLNKEDKRYLAENFIAFFNRDYRKVAELHVDSGWVPPDTNVEDFEFAIRTVCEPIFEKPLAEISFGHVLLNLFNTARRFNMEVQPQLVLLQKTLLYVEGVGRQLYPQLDLWKTAKPFLESWIKDQVGIPALTRALKEKAPFWVEKMPEIPELVYDSLRQGKYLQHSVDKIARELQVNHVRQSQSRYLLGIGATLLLSGSFLLVNRPEWGLMPGWLMVGGVVVWLVGWRKTR</sequence>
<protein>
    <recommendedName>
        <fullName evidence="1">Probable protein kinase UbiB</fullName>
        <ecNumber evidence="1">2.7.-.-</ecNumber>
    </recommendedName>
    <alternativeName>
        <fullName evidence="1">Ubiquinone biosynthesis protein UbiB</fullName>
    </alternativeName>
</protein>
<name>UBIB_SALPA</name>
<feature type="chain" id="PRO_1000050054" description="Probable protein kinase UbiB">
    <location>
        <begin position="1"/>
        <end position="546"/>
    </location>
</feature>
<feature type="transmembrane region" description="Helical" evidence="1">
    <location>
        <begin position="501"/>
        <end position="521"/>
    </location>
</feature>
<feature type="transmembrane region" description="Helical" evidence="1">
    <location>
        <begin position="522"/>
        <end position="542"/>
    </location>
</feature>
<feature type="domain" description="Protein kinase" evidence="1">
    <location>
        <begin position="124"/>
        <end position="502"/>
    </location>
</feature>
<feature type="active site" description="Proton acceptor" evidence="1">
    <location>
        <position position="288"/>
    </location>
</feature>
<feature type="binding site" evidence="1">
    <location>
        <begin position="130"/>
        <end position="138"/>
    </location>
    <ligand>
        <name>ATP</name>
        <dbReference type="ChEBI" id="CHEBI:30616"/>
    </ligand>
</feature>
<feature type="binding site" evidence="1">
    <location>
        <position position="153"/>
    </location>
    <ligand>
        <name>ATP</name>
        <dbReference type="ChEBI" id="CHEBI:30616"/>
    </ligand>
</feature>
<evidence type="ECO:0000255" key="1">
    <source>
        <dbReference type="HAMAP-Rule" id="MF_00414"/>
    </source>
</evidence>
<dbReference type="EC" id="2.7.-.-" evidence="1"/>
<dbReference type="EMBL" id="CP000026">
    <property type="protein sequence ID" value="AAV79589.1"/>
    <property type="molecule type" value="Genomic_DNA"/>
</dbReference>
<dbReference type="RefSeq" id="WP_000187559.1">
    <property type="nucleotide sequence ID" value="NC_006511.1"/>
</dbReference>
<dbReference type="SMR" id="Q5PKP2"/>
<dbReference type="KEGG" id="spt:SPA3813"/>
<dbReference type="HOGENOM" id="CLU_006533_0_0_6"/>
<dbReference type="UniPathway" id="UPA00232"/>
<dbReference type="Proteomes" id="UP000008185">
    <property type="component" value="Chromosome"/>
</dbReference>
<dbReference type="GO" id="GO:0005886">
    <property type="term" value="C:plasma membrane"/>
    <property type="evidence" value="ECO:0007669"/>
    <property type="project" value="UniProtKB-SubCell"/>
</dbReference>
<dbReference type="GO" id="GO:0005524">
    <property type="term" value="F:ATP binding"/>
    <property type="evidence" value="ECO:0007669"/>
    <property type="project" value="UniProtKB-KW"/>
</dbReference>
<dbReference type="GO" id="GO:0004672">
    <property type="term" value="F:protein kinase activity"/>
    <property type="evidence" value="ECO:0007669"/>
    <property type="project" value="UniProtKB-UniRule"/>
</dbReference>
<dbReference type="GO" id="GO:0010795">
    <property type="term" value="P:regulation of ubiquinone biosynthetic process"/>
    <property type="evidence" value="ECO:0007669"/>
    <property type="project" value="UniProtKB-UniRule"/>
</dbReference>
<dbReference type="GO" id="GO:0006744">
    <property type="term" value="P:ubiquinone biosynthetic process"/>
    <property type="evidence" value="ECO:0007669"/>
    <property type="project" value="UniProtKB-UniPathway"/>
</dbReference>
<dbReference type="CDD" id="cd13972">
    <property type="entry name" value="UbiB"/>
    <property type="match status" value="1"/>
</dbReference>
<dbReference type="HAMAP" id="MF_00414">
    <property type="entry name" value="UbiB"/>
    <property type="match status" value="1"/>
</dbReference>
<dbReference type="InterPro" id="IPR004147">
    <property type="entry name" value="ABC1_dom"/>
</dbReference>
<dbReference type="InterPro" id="IPR011009">
    <property type="entry name" value="Kinase-like_dom_sf"/>
</dbReference>
<dbReference type="InterPro" id="IPR010232">
    <property type="entry name" value="UbiB"/>
</dbReference>
<dbReference type="InterPro" id="IPR045308">
    <property type="entry name" value="UbiB_bact"/>
</dbReference>
<dbReference type="InterPro" id="IPR050154">
    <property type="entry name" value="UbiB_kinase"/>
</dbReference>
<dbReference type="NCBIfam" id="NF003404">
    <property type="entry name" value="PRK04750.1"/>
    <property type="match status" value="1"/>
</dbReference>
<dbReference type="NCBIfam" id="TIGR01982">
    <property type="entry name" value="UbiB"/>
    <property type="match status" value="1"/>
</dbReference>
<dbReference type="PANTHER" id="PTHR10566">
    <property type="entry name" value="CHAPERONE-ACTIVITY OF BC1 COMPLEX CABC1 -RELATED"/>
    <property type="match status" value="1"/>
</dbReference>
<dbReference type="PANTHER" id="PTHR10566:SF113">
    <property type="entry name" value="PROTEIN ACTIVITY OF BC1 COMPLEX KINASE 7, CHLOROPLASTIC"/>
    <property type="match status" value="1"/>
</dbReference>
<dbReference type="Pfam" id="PF03109">
    <property type="entry name" value="ABC1"/>
    <property type="match status" value="1"/>
</dbReference>
<dbReference type="SUPFAM" id="SSF56112">
    <property type="entry name" value="Protein kinase-like (PK-like)"/>
    <property type="match status" value="1"/>
</dbReference>
<organism>
    <name type="scientific">Salmonella paratyphi A (strain ATCC 9150 / SARB42)</name>
    <dbReference type="NCBI Taxonomy" id="295319"/>
    <lineage>
        <taxon>Bacteria</taxon>
        <taxon>Pseudomonadati</taxon>
        <taxon>Pseudomonadota</taxon>
        <taxon>Gammaproteobacteria</taxon>
        <taxon>Enterobacterales</taxon>
        <taxon>Enterobacteriaceae</taxon>
        <taxon>Salmonella</taxon>
    </lineage>
</organism>
<proteinExistence type="inferred from homology"/>
<gene>
    <name evidence="1" type="primary">ubiB</name>
    <name type="ordered locus">SPA3813</name>
</gene>
<comment type="function">
    <text evidence="1">Is probably a protein kinase regulator of UbiI activity which is involved in aerobic coenzyme Q (ubiquinone) biosynthesis.</text>
</comment>
<comment type="pathway">
    <text>Cofactor biosynthesis; ubiquinone biosynthesis [regulation].</text>
</comment>
<comment type="subcellular location">
    <subcellularLocation>
        <location evidence="1">Cell inner membrane</location>
        <topology evidence="1">Multi-pass membrane protein</topology>
    </subcellularLocation>
</comment>
<comment type="similarity">
    <text evidence="1">Belongs to the ABC1 family. UbiB subfamily.</text>
</comment>
<reference key="1">
    <citation type="journal article" date="2004" name="Nat. Genet.">
        <title>Comparison of genome degradation in Paratyphi A and Typhi, human-restricted serovars of Salmonella enterica that cause typhoid.</title>
        <authorList>
            <person name="McClelland M."/>
            <person name="Sanderson K.E."/>
            <person name="Clifton S.W."/>
            <person name="Latreille P."/>
            <person name="Porwollik S."/>
            <person name="Sabo A."/>
            <person name="Meyer R."/>
            <person name="Bieri T."/>
            <person name="Ozersky P."/>
            <person name="McLellan M."/>
            <person name="Harkins C.R."/>
            <person name="Wang C."/>
            <person name="Nguyen C."/>
            <person name="Berghoff A."/>
            <person name="Elliott G."/>
            <person name="Kohlberg S."/>
            <person name="Strong C."/>
            <person name="Du F."/>
            <person name="Carter J."/>
            <person name="Kremizki C."/>
            <person name="Layman D."/>
            <person name="Leonard S."/>
            <person name="Sun H."/>
            <person name="Fulton L."/>
            <person name="Nash W."/>
            <person name="Miner T."/>
            <person name="Minx P."/>
            <person name="Delehaunty K."/>
            <person name="Fronick C."/>
            <person name="Magrini V."/>
            <person name="Nhan M."/>
            <person name="Warren W."/>
            <person name="Florea L."/>
            <person name="Spieth J."/>
            <person name="Wilson R.K."/>
        </authorList>
    </citation>
    <scope>NUCLEOTIDE SEQUENCE [LARGE SCALE GENOMIC DNA]</scope>
    <source>
        <strain>ATCC 9150 / SARB42</strain>
    </source>
</reference>
<keyword id="KW-0067">ATP-binding</keyword>
<keyword id="KW-0997">Cell inner membrane</keyword>
<keyword id="KW-1003">Cell membrane</keyword>
<keyword id="KW-0418">Kinase</keyword>
<keyword id="KW-0472">Membrane</keyword>
<keyword id="KW-0547">Nucleotide-binding</keyword>
<keyword id="KW-0808">Transferase</keyword>
<keyword id="KW-0812">Transmembrane</keyword>
<keyword id="KW-1133">Transmembrane helix</keyword>
<keyword id="KW-0831">Ubiquinone biosynthesis</keyword>